<keyword id="KW-0067">ATP-binding</keyword>
<keyword id="KW-0963">Cytoplasm</keyword>
<keyword id="KW-0436">Ligase</keyword>
<keyword id="KW-0547">Nucleotide-binding</keyword>
<name>DLTA_LISMF</name>
<reference key="1">
    <citation type="journal article" date="2004" name="Nucleic Acids Res.">
        <title>Whole genome comparisons of serotype 4b and 1/2a strains of the food-borne pathogen Listeria monocytogenes reveal new insights into the core genome components of this species.</title>
        <authorList>
            <person name="Nelson K.E."/>
            <person name="Fouts D.E."/>
            <person name="Mongodin E.F."/>
            <person name="Ravel J."/>
            <person name="DeBoy R.T."/>
            <person name="Kolonay J.F."/>
            <person name="Rasko D.A."/>
            <person name="Angiuoli S.V."/>
            <person name="Gill S.R."/>
            <person name="Paulsen I.T."/>
            <person name="Peterson J.D."/>
            <person name="White O."/>
            <person name="Nelson W.C."/>
            <person name="Nierman W.C."/>
            <person name="Beanan M.J."/>
            <person name="Brinkac L.M."/>
            <person name="Daugherty S.C."/>
            <person name="Dodson R.J."/>
            <person name="Durkin A.S."/>
            <person name="Madupu R."/>
            <person name="Haft D.H."/>
            <person name="Selengut J."/>
            <person name="Van Aken S.E."/>
            <person name="Khouri H.M."/>
            <person name="Fedorova N."/>
            <person name="Forberger H.A."/>
            <person name="Tran B."/>
            <person name="Kathariou S."/>
            <person name="Wonderling L.D."/>
            <person name="Uhlich G.A."/>
            <person name="Bayles D.O."/>
            <person name="Luchansky J.B."/>
            <person name="Fraser C.M."/>
        </authorList>
    </citation>
    <scope>NUCLEOTIDE SEQUENCE [LARGE SCALE GENOMIC DNA]</scope>
    <source>
        <strain>F2365</strain>
    </source>
</reference>
<proteinExistence type="inferred from homology"/>
<dbReference type="EC" id="6.2.1.54" evidence="1"/>
<dbReference type="EMBL" id="AE017262">
    <property type="protein sequence ID" value="AAT03772.1"/>
    <property type="molecule type" value="Genomic_DNA"/>
</dbReference>
<dbReference type="RefSeq" id="WP_003727064.1">
    <property type="nucleotide sequence ID" value="NC_002973.6"/>
</dbReference>
<dbReference type="SMR" id="Q721J2"/>
<dbReference type="KEGG" id="lmf:LMOf2365_0994"/>
<dbReference type="HOGENOM" id="CLU_000022_2_12_9"/>
<dbReference type="UniPathway" id="UPA00556"/>
<dbReference type="GO" id="GO:0005737">
    <property type="term" value="C:cytoplasm"/>
    <property type="evidence" value="ECO:0007669"/>
    <property type="project" value="UniProtKB-SubCell"/>
</dbReference>
<dbReference type="GO" id="GO:0005524">
    <property type="term" value="F:ATP binding"/>
    <property type="evidence" value="ECO:0007669"/>
    <property type="project" value="UniProtKB-KW"/>
</dbReference>
<dbReference type="GO" id="GO:0047473">
    <property type="term" value="F:D-alanine [D-alanyl carrier protein] ligase activity"/>
    <property type="evidence" value="ECO:0007669"/>
    <property type="project" value="UniProtKB-UniRule"/>
</dbReference>
<dbReference type="GO" id="GO:0070395">
    <property type="term" value="P:lipoteichoic acid biosynthetic process"/>
    <property type="evidence" value="ECO:0007669"/>
    <property type="project" value="UniProtKB-UniRule"/>
</dbReference>
<dbReference type="CDD" id="cd05945">
    <property type="entry name" value="DltA"/>
    <property type="match status" value="1"/>
</dbReference>
<dbReference type="FunFam" id="3.30.300.30:FF:000012">
    <property type="entry name" value="D-alanine--D-alanyl carrier protein ligase"/>
    <property type="match status" value="1"/>
</dbReference>
<dbReference type="Gene3D" id="3.30.300.30">
    <property type="match status" value="1"/>
</dbReference>
<dbReference type="Gene3D" id="3.40.50.12780">
    <property type="entry name" value="N-terminal domain of ligase-like"/>
    <property type="match status" value="1"/>
</dbReference>
<dbReference type="HAMAP" id="MF_00593">
    <property type="entry name" value="DltA"/>
    <property type="match status" value="1"/>
</dbReference>
<dbReference type="InterPro" id="IPR010071">
    <property type="entry name" value="AA_adenyl_dom"/>
</dbReference>
<dbReference type="InterPro" id="IPR025110">
    <property type="entry name" value="AMP-bd_C"/>
</dbReference>
<dbReference type="InterPro" id="IPR045851">
    <property type="entry name" value="AMP-bd_C_sf"/>
</dbReference>
<dbReference type="InterPro" id="IPR020845">
    <property type="entry name" value="AMP-binding_CS"/>
</dbReference>
<dbReference type="InterPro" id="IPR000873">
    <property type="entry name" value="AMP-dep_synth/lig_dom"/>
</dbReference>
<dbReference type="InterPro" id="IPR042099">
    <property type="entry name" value="ANL_N_sf"/>
</dbReference>
<dbReference type="InterPro" id="IPR010072">
    <property type="entry name" value="DltA"/>
</dbReference>
<dbReference type="InterPro" id="IPR044507">
    <property type="entry name" value="DltA-like"/>
</dbReference>
<dbReference type="NCBIfam" id="TIGR01733">
    <property type="entry name" value="AA-adenyl-dom"/>
    <property type="match status" value="1"/>
</dbReference>
<dbReference type="NCBIfam" id="TIGR01734">
    <property type="entry name" value="D-ala-DACP-lig"/>
    <property type="match status" value="1"/>
</dbReference>
<dbReference type="NCBIfam" id="NF003417">
    <property type="entry name" value="PRK04813.1"/>
    <property type="match status" value="1"/>
</dbReference>
<dbReference type="PANTHER" id="PTHR45398">
    <property type="match status" value="1"/>
</dbReference>
<dbReference type="PANTHER" id="PTHR45398:SF1">
    <property type="entry name" value="ENZYME, PUTATIVE (JCVI)-RELATED"/>
    <property type="match status" value="1"/>
</dbReference>
<dbReference type="Pfam" id="PF00501">
    <property type="entry name" value="AMP-binding"/>
    <property type="match status" value="1"/>
</dbReference>
<dbReference type="Pfam" id="PF13193">
    <property type="entry name" value="AMP-binding_C"/>
    <property type="match status" value="1"/>
</dbReference>
<dbReference type="SUPFAM" id="SSF56801">
    <property type="entry name" value="Acetyl-CoA synthetase-like"/>
    <property type="match status" value="1"/>
</dbReference>
<dbReference type="PROSITE" id="PS00455">
    <property type="entry name" value="AMP_BINDING"/>
    <property type="match status" value="1"/>
</dbReference>
<accession>Q721J2</accession>
<organism>
    <name type="scientific">Listeria monocytogenes serotype 4b (strain F2365)</name>
    <dbReference type="NCBI Taxonomy" id="265669"/>
    <lineage>
        <taxon>Bacteria</taxon>
        <taxon>Bacillati</taxon>
        <taxon>Bacillota</taxon>
        <taxon>Bacilli</taxon>
        <taxon>Bacillales</taxon>
        <taxon>Listeriaceae</taxon>
        <taxon>Listeria</taxon>
    </lineage>
</organism>
<protein>
    <recommendedName>
        <fullName evidence="1">D-alanine--D-alanyl carrier protein ligase</fullName>
        <shortName evidence="1">DCL</shortName>
        <ecNumber evidence="1">6.2.1.54</ecNumber>
    </recommendedName>
    <alternativeName>
        <fullName evidence="1">D-alanine--poly(phosphoribitol) ligase subunit 1</fullName>
    </alternativeName>
    <alternativeName>
        <fullName evidence="1">D-alanine-activating enzyme</fullName>
        <shortName evidence="1">DAE</shortName>
    </alternativeName>
</protein>
<gene>
    <name evidence="1" type="primary">dltA</name>
    <name type="ordered locus">LMOf2365_0994</name>
</gene>
<comment type="function">
    <text evidence="1">Catalyzes the first step in the D-alanylation of lipoteichoic acid (LTA), the activation of D-alanine and its transfer onto the D-alanyl carrier protein (Dcp) DltC. In an ATP-dependent two-step reaction, forms a high energy D-alanyl-AMP intermediate, followed by transfer of the D-alanyl residue as a thiol ester to the phosphopantheinyl prosthetic group of the Dcp. D-alanylation of LTA plays an important role in modulating the properties of the cell wall in Gram-positive bacteria, influencing the net charge of the cell wall.</text>
</comment>
<comment type="catalytic activity">
    <reaction evidence="1">
        <text>holo-[D-alanyl-carrier protein] + D-alanine + ATP = D-alanyl-[D-alanyl-carrier protein] + AMP + diphosphate</text>
        <dbReference type="Rhea" id="RHEA:55132"/>
        <dbReference type="Rhea" id="RHEA-COMP:14102"/>
        <dbReference type="Rhea" id="RHEA-COMP:14103"/>
        <dbReference type="ChEBI" id="CHEBI:30616"/>
        <dbReference type="ChEBI" id="CHEBI:33019"/>
        <dbReference type="ChEBI" id="CHEBI:57416"/>
        <dbReference type="ChEBI" id="CHEBI:64479"/>
        <dbReference type="ChEBI" id="CHEBI:138620"/>
        <dbReference type="ChEBI" id="CHEBI:456215"/>
        <dbReference type="EC" id="6.2.1.54"/>
    </reaction>
</comment>
<comment type="pathway">
    <text evidence="1">Cell wall biogenesis; lipoteichoic acid biosynthesis.</text>
</comment>
<comment type="subcellular location">
    <subcellularLocation>
        <location evidence="1">Cytoplasm</location>
    </subcellularLocation>
</comment>
<comment type="similarity">
    <text evidence="1">Belongs to the ATP-dependent AMP-binding enzyme family. DltA subfamily.</text>
</comment>
<sequence length="510" mass="57613">MTTSIIERIDAWAEKTPDFPCYEYAGTRLSYKELKRQSDAFGSFLLKNLNTDKEKPIIVYGHMSPLMLVAFLGSIKSGRAYVPVDVSMPVERIEQIKKAADPSLFICTEELPSNLTITGCPVLTQDQLMDALEKHFGEVPDKEACVKNDDNYYIIYTSGSTGNPKGVQISQNNLVSFSNWILQDFSLSQGLRFLNQAPFSFDLSVMDLYPSLLSGGTLVPLDKTITANMKDLYREIPAQNLDVWVSTPSFADLCLLDDNFNQENNPGLIRFLFCGEVLAKKTASELLNRFPDAVIYNTYGPTEATVAVTQVKVTREVIDAYPSLPLGVIKPDMRLHIVDQETGEVLPEGEKGEIVLIGASVSKGYLNEPEKTDQVFFDYKGYQAYRTGDSGIIKDGYLFFQGRLDFQIKLHGYRIELEDIENNLKKVSYIQNCAIIPKMKDEKVDMLVAQVIPTNHDFEKEYQLSAAIKNELKEFMPAYMIPRKWIYKTEFPLTMNGKIDRKALNSEVNK</sequence>
<evidence type="ECO:0000255" key="1">
    <source>
        <dbReference type="HAMAP-Rule" id="MF_00593"/>
    </source>
</evidence>
<feature type="chain" id="PRO_0000213147" description="D-alanine--D-alanyl carrier protein ligase">
    <location>
        <begin position="1"/>
        <end position="510"/>
    </location>
</feature>
<feature type="binding site" evidence="1">
    <location>
        <begin position="157"/>
        <end position="158"/>
    </location>
    <ligand>
        <name>ATP</name>
        <dbReference type="ChEBI" id="CHEBI:30616"/>
    </ligand>
</feature>
<feature type="binding site" evidence="1">
    <location>
        <position position="202"/>
    </location>
    <ligand>
        <name>D-alanine</name>
        <dbReference type="ChEBI" id="CHEBI:57416"/>
    </ligand>
</feature>
<feature type="binding site" evidence="1">
    <location>
        <begin position="297"/>
        <end position="302"/>
    </location>
    <ligand>
        <name>ATP</name>
        <dbReference type="ChEBI" id="CHEBI:30616"/>
    </ligand>
</feature>
<feature type="binding site" evidence="1">
    <location>
        <position position="306"/>
    </location>
    <ligand>
        <name>D-alanine</name>
        <dbReference type="ChEBI" id="CHEBI:57416"/>
    </ligand>
</feature>
<feature type="binding site" evidence="1">
    <location>
        <position position="389"/>
    </location>
    <ligand>
        <name>ATP</name>
        <dbReference type="ChEBI" id="CHEBI:30616"/>
    </ligand>
</feature>
<feature type="binding site" evidence="1">
    <location>
        <position position="498"/>
    </location>
    <ligand>
        <name>ATP</name>
        <dbReference type="ChEBI" id="CHEBI:30616"/>
    </ligand>
</feature>
<feature type="binding site" evidence="1">
    <location>
        <position position="498"/>
    </location>
    <ligand>
        <name>D-alanine</name>
        <dbReference type="ChEBI" id="CHEBI:57416"/>
    </ligand>
</feature>